<gene>
    <name type="primary">ASZ1</name>
    <name type="synonym">GASZ</name>
</gene>
<reference key="1">
    <citation type="submission" date="2011-03" db="EMBL/GenBank/DDBJ databases">
        <title>Version 3 of the genome sequence of Otolemur garnettii(Bushbaby).</title>
        <authorList>
            <consortium name="The Broad Institute Genome Sequencing Platform"/>
            <person name="Di Palma F."/>
            <person name="Johnson J."/>
            <person name="Lander E.S."/>
            <person name="Lindblad-Toh K."/>
            <person name="Jaffe D.B."/>
            <person name="Gnerre S."/>
            <person name="MacCallum I."/>
            <person name="Przybylski D."/>
            <person name="Ribeiro F.J."/>
            <person name="Burton J.N."/>
            <person name="Walker B.J."/>
            <person name="Sharpe T."/>
            <person name="Hall G."/>
        </authorList>
    </citation>
    <scope>NUCLEOTIDE SEQUENCE [LARGE SCALE GENOMIC DNA]</scope>
</reference>
<comment type="function">
    <text evidence="1">Plays a central role during spermatogenesis by repressing transposable elements and preventing their mobilization, which is essential for the germline integrity. Acts via the piRNA metabolic process, which mediates the repression of transposable elements during meiosis by forming complexes composed of piRNAs and Piwi proteins and governs the methylation and subsequent repression of transposons. Its association with pi-bodies suggests a participation in the primary piRNAs metabolic process. Required prior to the pachytene stage to facilitate the production of multiple types of piRNAs, including those associated with repeats involved in the regulation of retrotransposons. May act by mediating protein-protein interactions during germ cell maturation (By similarity).</text>
</comment>
<comment type="subunit">
    <text evidence="1">Interacts with DDX4, PIWIL1, RANBP9 and TDRD1.</text>
</comment>
<comment type="subcellular location">
    <subcellularLocation>
        <location evidence="1">Cytoplasm</location>
    </subcellularLocation>
    <text evidence="1">Component of the meiotic nuage, also named P granule, a germ-cell-specific organelle required to repress transposon activity during meiosis. Specifically localizes to pi-bodies, a subset of the nuage which contains primary piRNAs (By similarity).</text>
</comment>
<name>ASZ1_OTOGA</name>
<evidence type="ECO:0000250" key="1"/>
<evidence type="ECO:0000250" key="2">
    <source>
        <dbReference type="UniProtKB" id="Q8VD46"/>
    </source>
</evidence>
<evidence type="ECO:0000256" key="3">
    <source>
        <dbReference type="SAM" id="MobiDB-lite"/>
    </source>
</evidence>
<protein>
    <recommendedName>
        <fullName>Ankyrin repeat, SAM and basic leucine zipper domain-containing protein 1</fullName>
    </recommendedName>
    <alternativeName>
        <fullName>Germ cell-specific ankyrin, SAM and basic leucine zipper domain-containing protein</fullName>
    </alternativeName>
</protein>
<organism>
    <name type="scientific">Otolemur garnettii</name>
    <name type="common">Small-eared galago</name>
    <name type="synonym">Garnett's greater bushbaby</name>
    <dbReference type="NCBI Taxonomy" id="30611"/>
    <lineage>
        <taxon>Eukaryota</taxon>
        <taxon>Metazoa</taxon>
        <taxon>Chordata</taxon>
        <taxon>Craniata</taxon>
        <taxon>Vertebrata</taxon>
        <taxon>Euteleostomi</taxon>
        <taxon>Mammalia</taxon>
        <taxon>Eutheria</taxon>
        <taxon>Euarchontoglires</taxon>
        <taxon>Primates</taxon>
        <taxon>Strepsirrhini</taxon>
        <taxon>Lorisiformes</taxon>
        <taxon>Galagidae</taxon>
        <taxon>Otolemur</taxon>
    </lineage>
</organism>
<feature type="chain" id="PRO_0000226357" description="Ankyrin repeat, SAM and basic leucine zipper domain-containing protein 1">
    <location>
        <begin position="1"/>
        <end position="475"/>
    </location>
</feature>
<feature type="repeat" description="ANK 1">
    <location>
        <begin position="45"/>
        <end position="74"/>
    </location>
</feature>
<feature type="repeat" description="ANK 2">
    <location>
        <begin position="78"/>
        <end position="107"/>
    </location>
</feature>
<feature type="repeat" description="ANK 3">
    <location>
        <begin position="110"/>
        <end position="144"/>
    </location>
</feature>
<feature type="repeat" description="ANK 4">
    <location>
        <begin position="148"/>
        <end position="177"/>
    </location>
</feature>
<feature type="repeat" description="ANK 5">
    <location>
        <begin position="181"/>
        <end position="210"/>
    </location>
</feature>
<feature type="repeat" description="ANK 6">
    <location>
        <begin position="214"/>
        <end position="243"/>
    </location>
</feature>
<feature type="domain" description="SAM">
    <location>
        <begin position="272"/>
        <end position="334"/>
    </location>
</feature>
<feature type="region of interest" description="Disordered" evidence="3">
    <location>
        <begin position="1"/>
        <end position="23"/>
    </location>
</feature>
<feature type="compositionally biased region" description="Low complexity" evidence="3">
    <location>
        <begin position="1"/>
        <end position="10"/>
    </location>
</feature>
<feature type="modified residue" description="Phosphoserine" evidence="2">
    <location>
        <position position="17"/>
    </location>
</feature>
<feature type="modified residue" description="Phosphoserine" evidence="2">
    <location>
        <position position="18"/>
    </location>
</feature>
<feature type="modified residue" description="Phosphoserine" evidence="2">
    <location>
        <position position="20"/>
    </location>
</feature>
<accession>Q2QLH1</accession>
<keyword id="KW-0040">ANK repeat</keyword>
<keyword id="KW-0963">Cytoplasm</keyword>
<keyword id="KW-0217">Developmental protein</keyword>
<keyword id="KW-0221">Differentiation</keyword>
<keyword id="KW-0469">Meiosis</keyword>
<keyword id="KW-0597">Phosphoprotein</keyword>
<keyword id="KW-1185">Reference proteome</keyword>
<keyword id="KW-0677">Repeat</keyword>
<keyword id="KW-0943">RNA-mediated gene silencing</keyword>
<keyword id="KW-0744">Spermatogenesis</keyword>
<dbReference type="EMBL" id="DP000013">
    <property type="protein sequence ID" value="ABA90407.1"/>
    <property type="molecule type" value="Genomic_DNA"/>
</dbReference>
<dbReference type="SMR" id="Q2QLH1"/>
<dbReference type="FunCoup" id="Q2QLH1">
    <property type="interactions" value="22"/>
</dbReference>
<dbReference type="STRING" id="30611.ENSOGAP00000002723"/>
<dbReference type="eggNOG" id="KOG0504">
    <property type="taxonomic scope" value="Eukaryota"/>
</dbReference>
<dbReference type="InParanoid" id="Q2QLH1"/>
<dbReference type="Proteomes" id="UP000005225">
    <property type="component" value="Unassembled WGS sequence"/>
</dbReference>
<dbReference type="GO" id="GO:0071546">
    <property type="term" value="C:pi-body"/>
    <property type="evidence" value="ECO:0000250"/>
    <property type="project" value="UniProtKB"/>
</dbReference>
<dbReference type="GO" id="GO:0030154">
    <property type="term" value="P:cell differentiation"/>
    <property type="evidence" value="ECO:0007669"/>
    <property type="project" value="UniProtKB-KW"/>
</dbReference>
<dbReference type="GO" id="GO:0007140">
    <property type="term" value="P:male meiotic nuclear division"/>
    <property type="evidence" value="ECO:0000250"/>
    <property type="project" value="UniProtKB"/>
</dbReference>
<dbReference type="GO" id="GO:0031047">
    <property type="term" value="P:regulatory ncRNA-mediated gene silencing"/>
    <property type="evidence" value="ECO:0007669"/>
    <property type="project" value="UniProtKB-KW"/>
</dbReference>
<dbReference type="GO" id="GO:0007283">
    <property type="term" value="P:spermatogenesis"/>
    <property type="evidence" value="ECO:0000250"/>
    <property type="project" value="UniProtKB"/>
</dbReference>
<dbReference type="GO" id="GO:0010526">
    <property type="term" value="P:transposable element silencing"/>
    <property type="evidence" value="ECO:0000250"/>
    <property type="project" value="UniProtKB"/>
</dbReference>
<dbReference type="CDD" id="cd09521">
    <property type="entry name" value="SAM_ASZ1"/>
    <property type="match status" value="1"/>
</dbReference>
<dbReference type="FunFam" id="1.25.40.20:FF:000192">
    <property type="entry name" value="Ankyrin repeat, SAM and basic leucine zipper domain-containing 1"/>
    <property type="match status" value="1"/>
</dbReference>
<dbReference type="FunFam" id="1.10.150.50:FF:000060">
    <property type="entry name" value="Ankyrin repeat, SAM and basic leucine zipper domain-containing protein 1"/>
    <property type="match status" value="1"/>
</dbReference>
<dbReference type="Gene3D" id="1.25.40.20">
    <property type="entry name" value="Ankyrin repeat-containing domain"/>
    <property type="match status" value="1"/>
</dbReference>
<dbReference type="Gene3D" id="1.10.150.50">
    <property type="entry name" value="Transcription Factor, Ets-1"/>
    <property type="match status" value="1"/>
</dbReference>
<dbReference type="InterPro" id="IPR002110">
    <property type="entry name" value="Ankyrin_rpt"/>
</dbReference>
<dbReference type="InterPro" id="IPR036770">
    <property type="entry name" value="Ankyrin_rpt-contain_sf"/>
</dbReference>
<dbReference type="InterPro" id="IPR042650">
    <property type="entry name" value="Asz1_SAM"/>
</dbReference>
<dbReference type="InterPro" id="IPR001660">
    <property type="entry name" value="SAM"/>
</dbReference>
<dbReference type="InterPro" id="IPR013761">
    <property type="entry name" value="SAM/pointed_sf"/>
</dbReference>
<dbReference type="PANTHER" id="PTHR24157">
    <property type="entry name" value="ANKYRIN REPEAT, SAM AND BASIC LEUCINE ZIPPER DOMAIN-CONTAINING PROTEIN 1"/>
    <property type="match status" value="1"/>
</dbReference>
<dbReference type="PANTHER" id="PTHR24157:SF3">
    <property type="entry name" value="ANKYRIN REPEAT, SAM AND BASIC LEUCINE ZIPPER DOMAIN-CONTAINING PROTEIN 1"/>
    <property type="match status" value="1"/>
</dbReference>
<dbReference type="Pfam" id="PF12796">
    <property type="entry name" value="Ank_2"/>
    <property type="match status" value="1"/>
</dbReference>
<dbReference type="Pfam" id="PF13637">
    <property type="entry name" value="Ank_4"/>
    <property type="match status" value="1"/>
</dbReference>
<dbReference type="Pfam" id="PF07647">
    <property type="entry name" value="SAM_2"/>
    <property type="match status" value="1"/>
</dbReference>
<dbReference type="PRINTS" id="PR01415">
    <property type="entry name" value="ANKYRIN"/>
</dbReference>
<dbReference type="SMART" id="SM00248">
    <property type="entry name" value="ANK"/>
    <property type="match status" value="5"/>
</dbReference>
<dbReference type="SUPFAM" id="SSF48403">
    <property type="entry name" value="Ankyrin repeat"/>
    <property type="match status" value="1"/>
</dbReference>
<dbReference type="SUPFAM" id="SSF140860">
    <property type="entry name" value="Pseudo ankyrin repeat-like"/>
    <property type="match status" value="1"/>
</dbReference>
<dbReference type="SUPFAM" id="SSF47769">
    <property type="entry name" value="SAM/Pointed domain"/>
    <property type="match status" value="1"/>
</dbReference>
<dbReference type="PROSITE" id="PS50297">
    <property type="entry name" value="ANK_REP_REGION"/>
    <property type="match status" value="1"/>
</dbReference>
<dbReference type="PROSITE" id="PS50088">
    <property type="entry name" value="ANK_REPEAT"/>
    <property type="match status" value="3"/>
</dbReference>
<proteinExistence type="inferred from homology"/>
<sequence length="475" mass="53095">MAAGALRGLAVAGGGESSESEDDGWEIGYLDRASQKLKGPLPIEEKNETFKKALTTGDISLVQELLDSGISVDSSFRYGWTPLMYAASVANVELVRVLLDRGANASFDKDKQTILITACSARGLEEQILKCVELLLSRNADPNVACRRLMTPIMYAARDGHPQVVALLVAHGAEVNTQDENGYTALTWAARQGHKNVVLKLLELGANKMLQTKDGKIPSEIAKRNKHLEIFNFLSLTLNPLEGNLQQLTKEETICKLLTTESDKEKDHLFSSYTAFGDLEIFLHGLGLEHMTDLLKEKDITLRHLLTMRKDEFTKNGINDKDQQKILSALKELEVEEIKFGELPEVAKLEISGDEFLNFLLKLNKQCGHLITAVQNIITELPVNSHKIVLEWASPRNFTSVCEELVNNVEDLSEEVCKLKDLIQKLQNERENDPTHIPLMEEVSTWNSRILKRTAIAVCGFGFLLFICKLTVQRK</sequence>